<gene>
    <name evidence="1" type="primary">purT</name>
    <name type="ordered locus">Pro_1184</name>
</gene>
<reference key="1">
    <citation type="journal article" date="2003" name="Proc. Natl. Acad. Sci. U.S.A.">
        <title>Genome sequence of the cyanobacterium Prochlorococcus marinus SS120, a nearly minimal oxyphototrophic genome.</title>
        <authorList>
            <person name="Dufresne A."/>
            <person name="Salanoubat M."/>
            <person name="Partensky F."/>
            <person name="Artiguenave F."/>
            <person name="Axmann I.M."/>
            <person name="Barbe V."/>
            <person name="Duprat S."/>
            <person name="Galperin M.Y."/>
            <person name="Koonin E.V."/>
            <person name="Le Gall F."/>
            <person name="Makarova K.S."/>
            <person name="Ostrowski M."/>
            <person name="Oztas S."/>
            <person name="Robert C."/>
            <person name="Rogozin I.B."/>
            <person name="Scanlan D.J."/>
            <person name="Tandeau de Marsac N."/>
            <person name="Weissenbach J."/>
            <person name="Wincker P."/>
            <person name="Wolf Y.I."/>
            <person name="Hess W.R."/>
        </authorList>
    </citation>
    <scope>NUCLEOTIDE SEQUENCE [LARGE SCALE GENOMIC DNA]</scope>
    <source>
        <strain>SARG / CCMP1375 / SS120</strain>
    </source>
</reference>
<sequence length="393" mass="43441">MTIFPKTLMLLGSGELGKEVAIAGKRLGCKVIACDRYEEAPAMQVADLAIVLDMNNHNSLQKTIRDYKPDVVIPEIEALAVEALKDIEKEGINVIPNARATAITMNRDQIRNLAAEKLAIKTANYGYASNIEELKEVSKKVGFPLLVKPVMSSSGKGQSLIKDKNDLEKAWDLAIKEARGDSKQVIIEEYINFDLEITLLTIKQSNHQTIFCPPIGHEQKGGDYQCSWQPQKLSFDQLKEAKSIAKKVTNELGGIGLFGVEFFIRGEEVIFSELSPRPHDTGLVTLISQNLNEFELHLRAILGLPIPSIECVSPSASRVILSQESFAKVAYKGIEKALEIQNSKIMIFGKPNTKKGRRMGVSLAQGKTLEEARFKADKSAKCIQIFEAKEAQS</sequence>
<name>PURT_PROMA</name>
<proteinExistence type="inferred from homology"/>
<feature type="chain" id="PRO_0000319198" description="Formate-dependent phosphoribosylglycinamide formyltransferase">
    <location>
        <begin position="1"/>
        <end position="393"/>
    </location>
</feature>
<feature type="domain" description="ATP-grasp" evidence="1">
    <location>
        <begin position="112"/>
        <end position="302"/>
    </location>
</feature>
<feature type="binding site" evidence="1">
    <location>
        <begin position="15"/>
        <end position="16"/>
    </location>
    <ligand>
        <name>N(1)-(5-phospho-beta-D-ribosyl)glycinamide</name>
        <dbReference type="ChEBI" id="CHEBI:143788"/>
    </ligand>
</feature>
<feature type="binding site" evidence="1">
    <location>
        <position position="75"/>
    </location>
    <ligand>
        <name>N(1)-(5-phospho-beta-D-ribosyl)glycinamide</name>
        <dbReference type="ChEBI" id="CHEBI:143788"/>
    </ligand>
</feature>
<feature type="binding site" evidence="1">
    <location>
        <position position="107"/>
    </location>
    <ligand>
        <name>ATP</name>
        <dbReference type="ChEBI" id="CHEBI:30616"/>
    </ligand>
</feature>
<feature type="binding site" evidence="1">
    <location>
        <position position="148"/>
    </location>
    <ligand>
        <name>ATP</name>
        <dbReference type="ChEBI" id="CHEBI:30616"/>
    </ligand>
</feature>
<feature type="binding site" evidence="1">
    <location>
        <begin position="153"/>
        <end position="158"/>
    </location>
    <ligand>
        <name>ATP</name>
        <dbReference type="ChEBI" id="CHEBI:30616"/>
    </ligand>
</feature>
<feature type="binding site" evidence="1">
    <location>
        <begin position="188"/>
        <end position="191"/>
    </location>
    <ligand>
        <name>ATP</name>
        <dbReference type="ChEBI" id="CHEBI:30616"/>
    </ligand>
</feature>
<feature type="binding site" evidence="1">
    <location>
        <position position="196"/>
    </location>
    <ligand>
        <name>ATP</name>
        <dbReference type="ChEBI" id="CHEBI:30616"/>
    </ligand>
</feature>
<feature type="binding site" evidence="1">
    <location>
        <position position="261"/>
    </location>
    <ligand>
        <name>Mg(2+)</name>
        <dbReference type="ChEBI" id="CHEBI:18420"/>
    </ligand>
</feature>
<feature type="binding site" evidence="1">
    <location>
        <position position="273"/>
    </location>
    <ligand>
        <name>Mg(2+)</name>
        <dbReference type="ChEBI" id="CHEBI:18420"/>
    </ligand>
</feature>
<feature type="binding site" evidence="1">
    <location>
        <position position="280"/>
    </location>
    <ligand>
        <name>N(1)-(5-phospho-beta-D-ribosyl)glycinamide</name>
        <dbReference type="ChEBI" id="CHEBI:143788"/>
    </ligand>
</feature>
<feature type="binding site" evidence="1">
    <location>
        <position position="350"/>
    </location>
    <ligand>
        <name>N(1)-(5-phospho-beta-D-ribosyl)glycinamide</name>
        <dbReference type="ChEBI" id="CHEBI:143788"/>
    </ligand>
</feature>
<feature type="binding site" evidence="1">
    <location>
        <begin position="357"/>
        <end position="358"/>
    </location>
    <ligand>
        <name>N(1)-(5-phospho-beta-D-ribosyl)glycinamide</name>
        <dbReference type="ChEBI" id="CHEBI:143788"/>
    </ligand>
</feature>
<dbReference type="EC" id="6.3.1.21" evidence="1"/>
<dbReference type="EMBL" id="AE017126">
    <property type="protein sequence ID" value="AAQ00229.1"/>
    <property type="molecule type" value="Genomic_DNA"/>
</dbReference>
<dbReference type="RefSeq" id="NP_875576.1">
    <property type="nucleotide sequence ID" value="NC_005042.1"/>
</dbReference>
<dbReference type="RefSeq" id="WP_011125336.1">
    <property type="nucleotide sequence ID" value="NC_005042.1"/>
</dbReference>
<dbReference type="SMR" id="Q7VBB3"/>
<dbReference type="STRING" id="167539.Pro_1184"/>
<dbReference type="EnsemblBacteria" id="AAQ00229">
    <property type="protein sequence ID" value="AAQ00229"/>
    <property type="gene ID" value="Pro_1184"/>
</dbReference>
<dbReference type="KEGG" id="pma:Pro_1184"/>
<dbReference type="PATRIC" id="fig|167539.5.peg.1240"/>
<dbReference type="eggNOG" id="COG0027">
    <property type="taxonomic scope" value="Bacteria"/>
</dbReference>
<dbReference type="HOGENOM" id="CLU_011534_1_3_3"/>
<dbReference type="OrthoDB" id="9804625at2"/>
<dbReference type="UniPathway" id="UPA00074">
    <property type="reaction ID" value="UER00127"/>
</dbReference>
<dbReference type="Proteomes" id="UP000001420">
    <property type="component" value="Chromosome"/>
</dbReference>
<dbReference type="GO" id="GO:0005829">
    <property type="term" value="C:cytosol"/>
    <property type="evidence" value="ECO:0007669"/>
    <property type="project" value="TreeGrafter"/>
</dbReference>
<dbReference type="GO" id="GO:0005524">
    <property type="term" value="F:ATP binding"/>
    <property type="evidence" value="ECO:0007669"/>
    <property type="project" value="UniProtKB-UniRule"/>
</dbReference>
<dbReference type="GO" id="GO:0000287">
    <property type="term" value="F:magnesium ion binding"/>
    <property type="evidence" value="ECO:0007669"/>
    <property type="project" value="InterPro"/>
</dbReference>
<dbReference type="GO" id="GO:0043815">
    <property type="term" value="F:phosphoribosylglycinamide formyltransferase 2 activity"/>
    <property type="evidence" value="ECO:0007669"/>
    <property type="project" value="UniProtKB-UniRule"/>
</dbReference>
<dbReference type="GO" id="GO:0004644">
    <property type="term" value="F:phosphoribosylglycinamide formyltransferase activity"/>
    <property type="evidence" value="ECO:0007669"/>
    <property type="project" value="InterPro"/>
</dbReference>
<dbReference type="GO" id="GO:0006189">
    <property type="term" value="P:'de novo' IMP biosynthetic process"/>
    <property type="evidence" value="ECO:0007669"/>
    <property type="project" value="UniProtKB-UniRule"/>
</dbReference>
<dbReference type="Gene3D" id="3.40.50.20">
    <property type="match status" value="1"/>
</dbReference>
<dbReference type="Gene3D" id="3.30.1490.20">
    <property type="entry name" value="ATP-grasp fold, A domain"/>
    <property type="match status" value="1"/>
</dbReference>
<dbReference type="Gene3D" id="3.30.470.20">
    <property type="entry name" value="ATP-grasp fold, B domain"/>
    <property type="match status" value="1"/>
</dbReference>
<dbReference type="HAMAP" id="MF_01643">
    <property type="entry name" value="PurT"/>
    <property type="match status" value="1"/>
</dbReference>
<dbReference type="InterPro" id="IPR011761">
    <property type="entry name" value="ATP-grasp"/>
</dbReference>
<dbReference type="InterPro" id="IPR003135">
    <property type="entry name" value="ATP-grasp_carboxylate-amine"/>
</dbReference>
<dbReference type="InterPro" id="IPR013815">
    <property type="entry name" value="ATP_grasp_subdomain_1"/>
</dbReference>
<dbReference type="InterPro" id="IPR016185">
    <property type="entry name" value="PreATP-grasp_dom_sf"/>
</dbReference>
<dbReference type="InterPro" id="IPR005862">
    <property type="entry name" value="PurT"/>
</dbReference>
<dbReference type="InterPro" id="IPR054350">
    <property type="entry name" value="PurT/PurK_preATP-grasp"/>
</dbReference>
<dbReference type="InterPro" id="IPR048740">
    <property type="entry name" value="PurT_C"/>
</dbReference>
<dbReference type="NCBIfam" id="NF006766">
    <property type="entry name" value="PRK09288.1"/>
    <property type="match status" value="1"/>
</dbReference>
<dbReference type="NCBIfam" id="TIGR01142">
    <property type="entry name" value="purT"/>
    <property type="match status" value="1"/>
</dbReference>
<dbReference type="PANTHER" id="PTHR43055">
    <property type="entry name" value="FORMATE-DEPENDENT PHOSPHORIBOSYLGLYCINAMIDE FORMYLTRANSFERASE"/>
    <property type="match status" value="1"/>
</dbReference>
<dbReference type="PANTHER" id="PTHR43055:SF1">
    <property type="entry name" value="FORMATE-DEPENDENT PHOSPHORIBOSYLGLYCINAMIDE FORMYLTRANSFERASE"/>
    <property type="match status" value="1"/>
</dbReference>
<dbReference type="Pfam" id="PF02222">
    <property type="entry name" value="ATP-grasp"/>
    <property type="match status" value="1"/>
</dbReference>
<dbReference type="Pfam" id="PF21244">
    <property type="entry name" value="PurT_C"/>
    <property type="match status" value="1"/>
</dbReference>
<dbReference type="Pfam" id="PF22660">
    <property type="entry name" value="RS_preATP-grasp-like"/>
    <property type="match status" value="1"/>
</dbReference>
<dbReference type="SUPFAM" id="SSF56059">
    <property type="entry name" value="Glutathione synthetase ATP-binding domain-like"/>
    <property type="match status" value="1"/>
</dbReference>
<dbReference type="SUPFAM" id="SSF52440">
    <property type="entry name" value="PreATP-grasp domain"/>
    <property type="match status" value="1"/>
</dbReference>
<dbReference type="PROSITE" id="PS50975">
    <property type="entry name" value="ATP_GRASP"/>
    <property type="match status" value="1"/>
</dbReference>
<protein>
    <recommendedName>
        <fullName evidence="1">Formate-dependent phosphoribosylglycinamide formyltransferase</fullName>
        <ecNumber evidence="1">6.3.1.21</ecNumber>
    </recommendedName>
    <alternativeName>
        <fullName evidence="1">5'-phosphoribosylglycinamide transformylase 2</fullName>
    </alternativeName>
    <alternativeName>
        <fullName evidence="1">Formate-dependent GAR transformylase</fullName>
    </alternativeName>
    <alternativeName>
        <fullName evidence="1">GAR transformylase 2</fullName>
        <shortName evidence="1">GART 2</shortName>
    </alternativeName>
    <alternativeName>
        <fullName evidence="1">Non-folate glycinamide ribonucleotide transformylase</fullName>
    </alternativeName>
    <alternativeName>
        <fullName evidence="1">Phosphoribosylglycinamide formyltransferase 2</fullName>
    </alternativeName>
</protein>
<keyword id="KW-0067">ATP-binding</keyword>
<keyword id="KW-0436">Ligase</keyword>
<keyword id="KW-0460">Magnesium</keyword>
<keyword id="KW-0479">Metal-binding</keyword>
<keyword id="KW-0547">Nucleotide-binding</keyword>
<keyword id="KW-0658">Purine biosynthesis</keyword>
<keyword id="KW-1185">Reference proteome</keyword>
<evidence type="ECO:0000255" key="1">
    <source>
        <dbReference type="HAMAP-Rule" id="MF_01643"/>
    </source>
</evidence>
<organism>
    <name type="scientific">Prochlorococcus marinus (strain SARG / CCMP1375 / SS120)</name>
    <dbReference type="NCBI Taxonomy" id="167539"/>
    <lineage>
        <taxon>Bacteria</taxon>
        <taxon>Bacillati</taxon>
        <taxon>Cyanobacteriota</taxon>
        <taxon>Cyanophyceae</taxon>
        <taxon>Synechococcales</taxon>
        <taxon>Prochlorococcaceae</taxon>
        <taxon>Prochlorococcus</taxon>
    </lineage>
</organism>
<accession>Q7VBB3</accession>
<comment type="function">
    <text evidence="1">Involved in the de novo purine biosynthesis. Catalyzes the transfer of formate to 5-phospho-ribosyl-glycinamide (GAR), producing 5-phospho-ribosyl-N-formylglycinamide (FGAR). Formate is provided by PurU via hydrolysis of 10-formyl-tetrahydrofolate.</text>
</comment>
<comment type="catalytic activity">
    <reaction evidence="1">
        <text>N(1)-(5-phospho-beta-D-ribosyl)glycinamide + formate + ATP = N(2)-formyl-N(1)-(5-phospho-beta-D-ribosyl)glycinamide + ADP + phosphate + H(+)</text>
        <dbReference type="Rhea" id="RHEA:24829"/>
        <dbReference type="ChEBI" id="CHEBI:15378"/>
        <dbReference type="ChEBI" id="CHEBI:15740"/>
        <dbReference type="ChEBI" id="CHEBI:30616"/>
        <dbReference type="ChEBI" id="CHEBI:43474"/>
        <dbReference type="ChEBI" id="CHEBI:143788"/>
        <dbReference type="ChEBI" id="CHEBI:147286"/>
        <dbReference type="ChEBI" id="CHEBI:456216"/>
        <dbReference type="EC" id="6.3.1.21"/>
    </reaction>
    <physiologicalReaction direction="left-to-right" evidence="1">
        <dbReference type="Rhea" id="RHEA:24830"/>
    </physiologicalReaction>
</comment>
<comment type="pathway">
    <text evidence="1">Purine metabolism; IMP biosynthesis via de novo pathway; N(2)-formyl-N(1)-(5-phospho-D-ribosyl)glycinamide from N(1)-(5-phospho-D-ribosyl)glycinamide (formate route): step 1/1.</text>
</comment>
<comment type="subunit">
    <text evidence="1">Homodimer.</text>
</comment>
<comment type="similarity">
    <text evidence="1">Belongs to the PurK/PurT family.</text>
</comment>